<organism>
    <name type="scientific">Columba livia</name>
    <name type="common">Rock dove</name>
    <dbReference type="NCBI Taxonomy" id="8932"/>
    <lineage>
        <taxon>Eukaryota</taxon>
        <taxon>Metazoa</taxon>
        <taxon>Chordata</taxon>
        <taxon>Craniata</taxon>
        <taxon>Vertebrata</taxon>
        <taxon>Euteleostomi</taxon>
        <taxon>Archelosauria</taxon>
        <taxon>Archosauria</taxon>
        <taxon>Dinosauria</taxon>
        <taxon>Saurischia</taxon>
        <taxon>Theropoda</taxon>
        <taxon>Coelurosauria</taxon>
        <taxon>Aves</taxon>
        <taxon>Neognathae</taxon>
        <taxon>Neoaves</taxon>
        <taxon>Columbimorphae</taxon>
        <taxon>Columbiformes</taxon>
        <taxon>Columbidae</taxon>
        <taxon>Columba</taxon>
    </lineage>
</organism>
<dbReference type="EMBL" id="U20353">
    <property type="protein sequence ID" value="AAA84745.1"/>
    <property type="molecule type" value="mRNA"/>
</dbReference>
<dbReference type="SMR" id="Q90375"/>
<dbReference type="GlyCosmos" id="Q90375">
    <property type="glycosylation" value="6 sites, No reported glycans"/>
</dbReference>
<dbReference type="eggNOG" id="KOG3555">
    <property type="taxonomic scope" value="Eukaryota"/>
</dbReference>
<dbReference type="GO" id="GO:0009897">
    <property type="term" value="C:external side of plasma membrane"/>
    <property type="evidence" value="ECO:0007669"/>
    <property type="project" value="TreeGrafter"/>
</dbReference>
<dbReference type="GO" id="GO:0005576">
    <property type="term" value="C:extracellular region"/>
    <property type="evidence" value="ECO:0007669"/>
    <property type="project" value="UniProtKB-SubCell"/>
</dbReference>
<dbReference type="GO" id="GO:0004896">
    <property type="term" value="F:cytokine receptor activity"/>
    <property type="evidence" value="ECO:0007669"/>
    <property type="project" value="InterPro"/>
</dbReference>
<dbReference type="GO" id="GO:0006897">
    <property type="term" value="P:endocytosis"/>
    <property type="evidence" value="ECO:0007669"/>
    <property type="project" value="UniProtKB-KW"/>
</dbReference>
<dbReference type="CDD" id="cd00063">
    <property type="entry name" value="FN3"/>
    <property type="match status" value="1"/>
</dbReference>
<dbReference type="FunFam" id="2.60.40.10:FF:000269">
    <property type="entry name" value="Growth hormone receptor"/>
    <property type="match status" value="1"/>
</dbReference>
<dbReference type="FunFam" id="2.60.40.10:FF:000318">
    <property type="entry name" value="Growth hormone receptor"/>
    <property type="match status" value="1"/>
</dbReference>
<dbReference type="Gene3D" id="2.60.40.10">
    <property type="entry name" value="Immunoglobulins"/>
    <property type="match status" value="2"/>
</dbReference>
<dbReference type="InterPro" id="IPR003961">
    <property type="entry name" value="FN3_dom"/>
</dbReference>
<dbReference type="InterPro" id="IPR036116">
    <property type="entry name" value="FN3_sf"/>
</dbReference>
<dbReference type="InterPro" id="IPR025871">
    <property type="entry name" value="GHBP"/>
</dbReference>
<dbReference type="InterPro" id="IPR015152">
    <property type="entry name" value="Growth/epo_recpt_lig-bind"/>
</dbReference>
<dbReference type="InterPro" id="IPR013783">
    <property type="entry name" value="Ig-like_fold"/>
</dbReference>
<dbReference type="InterPro" id="IPR003528">
    <property type="entry name" value="Long_hematopoietin_rcpt_CS"/>
</dbReference>
<dbReference type="PANTHER" id="PTHR23037">
    <property type="entry name" value="CYTOKINE RECEPTOR"/>
    <property type="match status" value="1"/>
</dbReference>
<dbReference type="PANTHER" id="PTHR23037:SF46">
    <property type="entry name" value="INTERLEUKIN 5 RECEPTOR SUBUNIT ALPHA"/>
    <property type="match status" value="1"/>
</dbReference>
<dbReference type="Pfam" id="PF09067">
    <property type="entry name" value="EpoR_lig-bind"/>
    <property type="match status" value="1"/>
</dbReference>
<dbReference type="Pfam" id="PF00041">
    <property type="entry name" value="fn3"/>
    <property type="match status" value="1"/>
</dbReference>
<dbReference type="Pfam" id="PF12772">
    <property type="entry name" value="GHBP"/>
    <property type="match status" value="1"/>
</dbReference>
<dbReference type="SMART" id="SM00060">
    <property type="entry name" value="FN3"/>
    <property type="match status" value="1"/>
</dbReference>
<dbReference type="SUPFAM" id="SSF49265">
    <property type="entry name" value="Fibronectin type III"/>
    <property type="match status" value="2"/>
</dbReference>
<dbReference type="PROSITE" id="PS50853">
    <property type="entry name" value="FN3"/>
    <property type="match status" value="1"/>
</dbReference>
<dbReference type="PROSITE" id="PS01352">
    <property type="entry name" value="HEMATOPO_REC_L_F1"/>
    <property type="match status" value="1"/>
</dbReference>
<gene>
    <name type="primary">GHR</name>
</gene>
<protein>
    <recommendedName>
        <fullName evidence="8">Growth hormone receptor</fullName>
        <shortName>GH receptor</shortName>
    </recommendedName>
    <alternativeName>
        <fullName>Somatotropin receptor</fullName>
    </alternativeName>
    <component>
        <recommendedName>
            <fullName>Growth hormone-binding protein</fullName>
            <shortName>GH-binding protein</shortName>
            <shortName>GHBP</shortName>
        </recommendedName>
        <alternativeName>
            <fullName>Serum-binding protein</fullName>
        </alternativeName>
    </component>
</protein>
<feature type="signal peptide" evidence="5">
    <location>
        <begin position="1"/>
        <end position="20"/>
    </location>
</feature>
<feature type="chain" id="PRO_0000010945" description="Growth hormone receptor">
    <location>
        <begin position="21"/>
        <end position="611"/>
    </location>
</feature>
<feature type="chain" id="PRO_0000010946" description="Growth hormone-binding protein" evidence="4">
    <location>
        <begin position="21"/>
        <end status="unknown"/>
    </location>
</feature>
<feature type="topological domain" description="Extracellular" evidence="5">
    <location>
        <begin position="21"/>
        <end position="240"/>
    </location>
</feature>
<feature type="transmembrane region" description="Helical" evidence="5">
    <location>
        <begin position="241"/>
        <end position="264"/>
    </location>
</feature>
<feature type="topological domain" description="Cytoplasmic" evidence="5">
    <location>
        <begin position="265"/>
        <end position="611"/>
    </location>
</feature>
<feature type="domain" description="Fibronectin type-III" evidence="6">
    <location>
        <begin position="125"/>
        <end position="228"/>
    </location>
</feature>
<feature type="region of interest" description="Required for JAK2 binding" evidence="2">
    <location>
        <begin position="270"/>
        <end position="355"/>
    </location>
</feature>
<feature type="region of interest" description="Disordered" evidence="7">
    <location>
        <begin position="411"/>
        <end position="455"/>
    </location>
</feature>
<feature type="short sequence motif" description="WSXWS motif" evidence="1">
    <location>
        <begin position="214"/>
        <end position="218"/>
    </location>
</feature>
<feature type="short sequence motif" description="Box 1 motif" evidence="2">
    <location>
        <begin position="273"/>
        <end position="281"/>
    </location>
</feature>
<feature type="short sequence motif" description="UbE motif" evidence="3">
    <location>
        <begin position="316"/>
        <end position="325"/>
    </location>
</feature>
<feature type="compositionally biased region" description="Polar residues" evidence="7">
    <location>
        <begin position="414"/>
        <end position="433"/>
    </location>
</feature>
<feature type="glycosylation site" description="N-linked (GlcNAc...) asparagine" evidence="5">
    <location>
        <position position="16"/>
    </location>
</feature>
<feature type="glycosylation site" description="N-linked (GlcNAc...) asparagine" evidence="5">
    <location>
        <position position="53"/>
    </location>
</feature>
<feature type="glycosylation site" description="N-linked (GlcNAc...) asparagine" evidence="5">
    <location>
        <position position="89"/>
    </location>
</feature>
<feature type="glycosylation site" description="N-linked (GlcNAc...) asparagine" evidence="5">
    <location>
        <position position="130"/>
    </location>
</feature>
<feature type="glycosylation site" description="N-linked (GlcNAc...) asparagine" evidence="5">
    <location>
        <position position="135"/>
    </location>
</feature>
<feature type="glycosylation site" description="N-linked (GlcNAc...) asparagine" evidence="5">
    <location>
        <position position="174"/>
    </location>
</feature>
<feature type="disulfide bond" evidence="1">
    <location>
        <begin position="34"/>
        <end position="44"/>
    </location>
</feature>
<feature type="disulfide bond" evidence="1">
    <location>
        <begin position="75"/>
        <end position="86"/>
    </location>
</feature>
<feature type="disulfide bond" evidence="1">
    <location>
        <begin position="100"/>
        <end position="114"/>
    </location>
</feature>
<reference key="1">
    <citation type="submission" date="1996-01" db="EMBL/GenBank/DDBJ databases">
        <title>Molecular cloning of the entire coding sequence of pigeon growth hormone receptor cDNA by PCR techniques.</title>
        <authorList>
            <person name="Cheng C.H.K."/>
            <person name="Shaw P.C."/>
            <person name="Tsim K.W.K."/>
            <person name="Lau K.F."/>
        </authorList>
    </citation>
    <scope>NUCLEOTIDE SEQUENCE [MRNA]</scope>
    <source>
        <tissue>Liver</tissue>
    </source>
</reference>
<comment type="function">
    <text evidence="1">Receptor for pituitary gland growth hormone (GH1) involved in regulating postnatal body growth. On ligand binding, couples to the JAK2/STAT5 pathway.</text>
</comment>
<comment type="function">
    <molecule>Growth hormone-binding protein</molecule>
    <text evidence="1">The soluble form (GHBP) acts as a reservoir of growth hormone in plasma and may be a modulator/inhibitor of GH signaling.</text>
</comment>
<comment type="subcellular location">
    <subcellularLocation>
        <location evidence="1">Cell membrane</location>
        <topology evidence="5">Single-pass type I membrane protein</topology>
    </subcellularLocation>
    <text evidence="3">On growth hormone binding, GHR is ubiquitinated, internalized, down-regulated and transported into a degradative or non-degradative pathway.</text>
</comment>
<comment type="subcellular location">
    <molecule>Growth hormone-binding protein</molecule>
    <subcellularLocation>
        <location evidence="1">Secreted</location>
    </subcellularLocation>
    <text evidence="1">Complexed to a substantial fraction of circulating GH.</text>
</comment>
<comment type="PTM">
    <text evidence="1">The soluble form (GHBP) is produced by phorbol ester-promoted proteolytic cleavage at the cell surface (shedding) by ADAM17/TACE.</text>
</comment>
<comment type="similarity">
    <text evidence="9">Belongs to the type I cytokine receptor family. Type 1 subfamily.</text>
</comment>
<accession>Q90375</accession>
<evidence type="ECO:0000250" key="1">
    <source>
        <dbReference type="UniProtKB" id="P10912"/>
    </source>
</evidence>
<evidence type="ECO:0000250" key="2">
    <source>
        <dbReference type="UniProtKB" id="P16310"/>
    </source>
</evidence>
<evidence type="ECO:0000250" key="3">
    <source>
        <dbReference type="UniProtKB" id="P19941"/>
    </source>
</evidence>
<evidence type="ECO:0000250" key="4">
    <source>
        <dbReference type="UniProtKB" id="Q02092"/>
    </source>
</evidence>
<evidence type="ECO:0000255" key="5"/>
<evidence type="ECO:0000255" key="6">
    <source>
        <dbReference type="PROSITE-ProRule" id="PRU00316"/>
    </source>
</evidence>
<evidence type="ECO:0000256" key="7">
    <source>
        <dbReference type="SAM" id="MobiDB-lite"/>
    </source>
</evidence>
<evidence type="ECO:0000303" key="8">
    <source ref="1"/>
</evidence>
<evidence type="ECO:0000305" key="9"/>
<name>GHR_COLLI</name>
<proteinExistence type="evidence at transcript level"/>
<keyword id="KW-1003">Cell membrane</keyword>
<keyword id="KW-1015">Disulfide bond</keyword>
<keyword id="KW-0254">Endocytosis</keyword>
<keyword id="KW-0325">Glycoprotein</keyword>
<keyword id="KW-0472">Membrane</keyword>
<keyword id="KW-0597">Phosphoprotein</keyword>
<keyword id="KW-0675">Receptor</keyword>
<keyword id="KW-0964">Secreted</keyword>
<keyword id="KW-0732">Signal</keyword>
<keyword id="KW-0812">Transmembrane</keyword>
<keyword id="KW-1133">Transmembrane helix</keyword>
<sequence length="611" mass="68851">MDLRHLLLTLVLVCANDSLSASDDVLRLPQISKCRSPELETFSCYWTDGNFYNLSAPGTIQLLYMKRNDEDWKECPDYITAGENSCYFNTSYTSIWIPYCVKLVNKDEVFDEKCFSVDEIVLPDPPVHLNWTLLNTSQTGIHGDIQVRWDPPPTADVQKGWITLEYELQYKEVNETKWKELEPRLSTMVPLYSLKIGRDYEIRVRSRQRTSEKFGEFSEILYVSFSQAGIEFVHCAEEIEFPWFLVVIFGACGLAVTVILILLSKQSRLKMLIFPPVPVPKIKGIDPDLLKKGKLDEVNSILASHDNYKTQLYNDDLWVEFIELDIEDPDEKNRVSDTDRLLSEDHLKSHSCLGAKDDDSGRASCCEPDIPETDFSASDTCDAISDIDQFKKVTEKEEDLLCLGRKDNDESLPSLANTDTQQPRMSTRPENSQPWPPFADSIDAASPSAHNQLSNQNSLRNTDFYAQVSDITPAGSVVLSPGQKSKVARARCEFCTEQNFTLDNAYFCEADVKKCIAVISHEEDEPRVQAQICNEDTYFTTESLTTTGISLGASTAETPSPEVPVPDYTSIHIVHSPQGLVLNATALPVPDKEFNMSCGYVSTDQLNKIMP</sequence>